<dbReference type="GO" id="GO:0005576">
    <property type="term" value="C:extracellular region"/>
    <property type="evidence" value="ECO:0007669"/>
    <property type="project" value="UniProtKB-SubCell"/>
</dbReference>
<protein>
    <recommendedName>
        <fullName evidence="2">Conotoxin Bn5a</fullName>
    </recommendedName>
    <alternativeName>
        <fullName evidence="3">Bn5.1</fullName>
    </alternativeName>
</protein>
<evidence type="ECO:0000269" key="1">
    <source>
    </source>
</evidence>
<evidence type="ECO:0000303" key="2">
    <source>
    </source>
</evidence>
<evidence type="ECO:0000305" key="3"/>
<evidence type="ECO:0000305" key="4">
    <source>
    </source>
</evidence>
<comment type="subcellular location">
    <subcellularLocation>
        <location evidence="1">Secreted</location>
    </subcellularLocation>
</comment>
<comment type="tissue specificity">
    <text evidence="4">Expressed by the venom duct.</text>
</comment>
<comment type="domain">
    <text evidence="3">The cysteine framework is V (CC-CC).</text>
</comment>
<comment type="mass spectrometry" mass="1094.26" method="MALDI" evidence="1">
    <text>Monoisotopic mass.</text>
</comment>
<comment type="similarity">
    <text evidence="3">Belongs to the conotoxin T superfamily.</text>
</comment>
<organism>
    <name type="scientific">Conus bandanus</name>
    <name type="common">Banded marble cone</name>
    <dbReference type="NCBI Taxonomy" id="72279"/>
    <lineage>
        <taxon>Eukaryota</taxon>
        <taxon>Metazoa</taxon>
        <taxon>Spiralia</taxon>
        <taxon>Lophotrochozoa</taxon>
        <taxon>Mollusca</taxon>
        <taxon>Gastropoda</taxon>
        <taxon>Caenogastropoda</taxon>
        <taxon>Neogastropoda</taxon>
        <taxon>Conoidea</taxon>
        <taxon>Conidae</taxon>
        <taxon>Conus</taxon>
    </lineage>
</organism>
<proteinExistence type="evidence at protein level"/>
<sequence length="10" mass="1099">NGCCIVRECC</sequence>
<accession>P0DQQ7</accession>
<keyword id="KW-0903">Direct protein sequencing</keyword>
<keyword id="KW-1015">Disulfide bond</keyword>
<keyword id="KW-0964">Secreted</keyword>
<reference key="1">
    <citation type="journal article" date="2020" name="J. Venom. Anim. Toxins Incl. Trop. Dis.">
        <title>Isolation and structural identification of a new T1-conotoxin with unique disulfide connectivities derived from Conus bandanus.</title>
        <authorList>
            <person name="Bao N."/>
            <person name="Lecaer J.P."/>
            <person name="Nghia N.D."/>
            <person name="Vinh P.T.K."/>
        </authorList>
    </citation>
    <scope>PROTEIN SEQUENCE</scope>
    <scope>MASS SPECTROMETRY</scope>
    <scope>SUBCELLULAR LOCATION</scope>
    <scope>DISULFIDE BONDS</scope>
    <source>
        <tissue>Venom</tissue>
    </source>
</reference>
<feature type="peptide" id="PRO_0000453396" description="Conotoxin Bn5a" evidence="1">
    <location>
        <begin position="1"/>
        <end position="10"/>
    </location>
</feature>
<feature type="disulfide bond" evidence="1">
    <location>
        <begin position="3"/>
        <end position="10"/>
    </location>
</feature>
<feature type="disulfide bond" evidence="1">
    <location>
        <begin position="4"/>
        <end position="9"/>
    </location>
</feature>
<name>CT5A_CONBN</name>